<gene>
    <name type="primary">phoR</name>
    <name type="ordered locus">PA5361</name>
</gene>
<keyword id="KW-0067">ATP-binding</keyword>
<keyword id="KW-1003">Cell membrane</keyword>
<keyword id="KW-0418">Kinase</keyword>
<keyword id="KW-0472">Membrane</keyword>
<keyword id="KW-0547">Nucleotide-binding</keyword>
<keyword id="KW-0592">Phosphate transport</keyword>
<keyword id="KW-0597">Phosphoprotein</keyword>
<keyword id="KW-1185">Reference proteome</keyword>
<keyword id="KW-0808">Transferase</keyword>
<keyword id="KW-0812">Transmembrane</keyword>
<keyword id="KW-1133">Transmembrane helix</keyword>
<keyword id="KW-0813">Transport</keyword>
<keyword id="KW-0902">Two-component regulatory system</keyword>
<comment type="function">
    <text>Member of the two-component regulatory system PhoR/PhoB involved in the phosphate regulon genes expression. PhoR may function as a membrane-associated protein kinase that phosphorylates PhoB in response to environmental signals.</text>
</comment>
<comment type="catalytic activity">
    <reaction>
        <text>ATP + protein L-histidine = ADP + protein N-phospho-L-histidine.</text>
        <dbReference type="EC" id="2.7.13.3"/>
    </reaction>
</comment>
<comment type="subcellular location">
    <subcellularLocation>
        <location evidence="4">Cell membrane</location>
        <topology evidence="4">Single-pass membrane protein</topology>
    </subcellularLocation>
</comment>
<reference key="1">
    <citation type="journal article" date="2000" name="Nature">
        <title>Complete genome sequence of Pseudomonas aeruginosa PAO1, an opportunistic pathogen.</title>
        <authorList>
            <person name="Stover C.K."/>
            <person name="Pham X.-Q.T."/>
            <person name="Erwin A.L."/>
            <person name="Mizoguchi S.D."/>
            <person name="Warrener P."/>
            <person name="Hickey M.J."/>
            <person name="Brinkman F.S.L."/>
            <person name="Hufnagle W.O."/>
            <person name="Kowalik D.J."/>
            <person name="Lagrou M."/>
            <person name="Garber R.L."/>
            <person name="Goltry L."/>
            <person name="Tolentino E."/>
            <person name="Westbrock-Wadman S."/>
            <person name="Yuan Y."/>
            <person name="Brody L.L."/>
            <person name="Coulter S.N."/>
            <person name="Folger K.R."/>
            <person name="Kas A."/>
            <person name="Larbig K."/>
            <person name="Lim R.M."/>
            <person name="Smith K.A."/>
            <person name="Spencer D.H."/>
            <person name="Wong G.K.-S."/>
            <person name="Wu Z."/>
            <person name="Paulsen I.T."/>
            <person name="Reizer J."/>
            <person name="Saier M.H. Jr."/>
            <person name="Hancock R.E.W."/>
            <person name="Lory S."/>
            <person name="Olson M.V."/>
        </authorList>
    </citation>
    <scope>NUCLEOTIDE SEQUENCE [LARGE SCALE GENOMIC DNA]</scope>
    <source>
        <strain>ATCC 15692 / DSM 22644 / CIP 104116 / JCM 14847 / LMG 12228 / 1C / PRS 101 / PAO1</strain>
    </source>
</reference>
<reference key="2">
    <citation type="journal article" date="1990" name="J. Bacteriol.">
        <title>Nucleotide sequence of the Pseudomonas aeruginosa phoB gene, the regulatory gene for the phosphate regulon.</title>
        <authorList>
            <person name="Anba J."/>
            <person name="Bidaud M."/>
            <person name="Vasil M.L."/>
            <person name="Lazdunski A."/>
        </authorList>
    </citation>
    <scope>NUCLEOTIDE SEQUENCE [GENOMIC DNA] OF 1-99</scope>
</reference>
<sequence length="443" mass="50120">MQSVVNQDWRGALIRHLLLVLAASLVLGVVSGHYGWALALGLALYLGWTLWQLLRLHQWLRNHQPDEPPPDSYGLWGEVFDNIYHLQRRNQRARGRLQAVIDRIQESTAALRDAVIMLDSDGNLEWWNLAAENLLGLKTPQDGGQPVSNLIRHPRFKEYFDQEDYREPLEIPSPINERLRLQFHITLYGNREHLMLVRDVTRVHQLEQMRKDFVANVSHELRTPLTVIAGYLETLLDNVEDVNPRWLRALQQMQQQAGRMQNLLNDLLLLAKLEATDYPGDNKPVAVDALLASIRNDAQALSAGRNHRISLDAAPAVQLKGSEAELRSAFSNLVFNAVKYTPDEGEIRIRWWADEQGAHLSVQDTGIGVDPKHLPRLTERFYRVDSSRASNTGGTGLGLAIVKHVLIRHRARLEISSVPGKGSTFTCHFAPAQVAEAERKAPK</sequence>
<dbReference type="EC" id="2.7.13.3"/>
<dbReference type="EMBL" id="AE004091">
    <property type="protein sequence ID" value="AAG08746.1"/>
    <property type="molecule type" value="Genomic_DNA"/>
</dbReference>
<dbReference type="PIR" id="B37775">
    <property type="entry name" value="B37775"/>
</dbReference>
<dbReference type="PIR" id="D82975">
    <property type="entry name" value="D82975"/>
</dbReference>
<dbReference type="RefSeq" id="NP_254048.1">
    <property type="nucleotide sequence ID" value="NC_002516.2"/>
</dbReference>
<dbReference type="RefSeq" id="WP_003121316.1">
    <property type="nucleotide sequence ID" value="NZ_QZGE01000020.1"/>
</dbReference>
<dbReference type="SMR" id="P23621"/>
<dbReference type="FunCoup" id="P23621">
    <property type="interactions" value="751"/>
</dbReference>
<dbReference type="STRING" id="208964.PA5361"/>
<dbReference type="PaxDb" id="208964-PA5361"/>
<dbReference type="GeneID" id="878511"/>
<dbReference type="KEGG" id="pae:PA5361"/>
<dbReference type="PATRIC" id="fig|208964.12.peg.5618"/>
<dbReference type="PseudoCAP" id="PA5361"/>
<dbReference type="HOGENOM" id="CLU_000445_89_2_6"/>
<dbReference type="InParanoid" id="P23621"/>
<dbReference type="OrthoDB" id="9813151at2"/>
<dbReference type="PhylomeDB" id="P23621"/>
<dbReference type="BioCyc" id="PAER208964:G1FZ6-5483-MONOMER"/>
<dbReference type="BRENDA" id="2.7.13.3">
    <property type="organism ID" value="5087"/>
</dbReference>
<dbReference type="Proteomes" id="UP000002438">
    <property type="component" value="Chromosome"/>
</dbReference>
<dbReference type="GO" id="GO:0005886">
    <property type="term" value="C:plasma membrane"/>
    <property type="evidence" value="ECO:0000318"/>
    <property type="project" value="GO_Central"/>
</dbReference>
<dbReference type="GO" id="GO:0005524">
    <property type="term" value="F:ATP binding"/>
    <property type="evidence" value="ECO:0007669"/>
    <property type="project" value="UniProtKB-KW"/>
</dbReference>
<dbReference type="GO" id="GO:0004721">
    <property type="term" value="F:phosphoprotein phosphatase activity"/>
    <property type="evidence" value="ECO:0000318"/>
    <property type="project" value="GO_Central"/>
</dbReference>
<dbReference type="GO" id="GO:0000155">
    <property type="term" value="F:phosphorelay sensor kinase activity"/>
    <property type="evidence" value="ECO:0000318"/>
    <property type="project" value="GO_Central"/>
</dbReference>
<dbReference type="GO" id="GO:0016036">
    <property type="term" value="P:cellular response to phosphate starvation"/>
    <property type="evidence" value="ECO:0000318"/>
    <property type="project" value="GO_Central"/>
</dbReference>
<dbReference type="GO" id="GO:0006817">
    <property type="term" value="P:phosphate ion transport"/>
    <property type="evidence" value="ECO:0007669"/>
    <property type="project" value="UniProtKB-KW"/>
</dbReference>
<dbReference type="GO" id="GO:0006355">
    <property type="term" value="P:regulation of DNA-templated transcription"/>
    <property type="evidence" value="ECO:0007669"/>
    <property type="project" value="InterPro"/>
</dbReference>
<dbReference type="CDD" id="cd16952">
    <property type="entry name" value="HATPase_EcPhoR-like"/>
    <property type="match status" value="1"/>
</dbReference>
<dbReference type="CDD" id="cd00082">
    <property type="entry name" value="HisKA"/>
    <property type="match status" value="1"/>
</dbReference>
<dbReference type="CDD" id="cd00130">
    <property type="entry name" value="PAS"/>
    <property type="match status" value="1"/>
</dbReference>
<dbReference type="FunFam" id="3.30.450.20:FF:000076">
    <property type="entry name" value="Phosphate regulon sensor histidine kinase PhoR"/>
    <property type="match status" value="1"/>
</dbReference>
<dbReference type="FunFam" id="3.30.565.10:FF:000032">
    <property type="entry name" value="Phosphate regulon sensor histidine kinase PhoR"/>
    <property type="match status" value="1"/>
</dbReference>
<dbReference type="FunFam" id="1.10.287.130:FF:000001">
    <property type="entry name" value="Two-component sensor histidine kinase"/>
    <property type="match status" value="1"/>
</dbReference>
<dbReference type="Gene3D" id="1.10.287.130">
    <property type="match status" value="1"/>
</dbReference>
<dbReference type="Gene3D" id="3.30.565.10">
    <property type="entry name" value="Histidine kinase-like ATPase, C-terminal domain"/>
    <property type="match status" value="1"/>
</dbReference>
<dbReference type="Gene3D" id="3.30.450.20">
    <property type="entry name" value="PAS domain"/>
    <property type="match status" value="1"/>
</dbReference>
<dbReference type="InterPro" id="IPR050351">
    <property type="entry name" value="2-comp_sensor_kinase"/>
</dbReference>
<dbReference type="InterPro" id="IPR036890">
    <property type="entry name" value="HATPase_C_sf"/>
</dbReference>
<dbReference type="InterPro" id="IPR005467">
    <property type="entry name" value="His_kinase_dom"/>
</dbReference>
<dbReference type="InterPro" id="IPR003661">
    <property type="entry name" value="HisK_dim/P_dom"/>
</dbReference>
<dbReference type="InterPro" id="IPR036097">
    <property type="entry name" value="HisK_dim/P_sf"/>
</dbReference>
<dbReference type="InterPro" id="IPR000014">
    <property type="entry name" value="PAS"/>
</dbReference>
<dbReference type="InterPro" id="IPR035965">
    <property type="entry name" value="PAS-like_dom_sf"/>
</dbReference>
<dbReference type="InterPro" id="IPR013767">
    <property type="entry name" value="PAS_fold"/>
</dbReference>
<dbReference type="InterPro" id="IPR021766">
    <property type="entry name" value="PhoR"/>
</dbReference>
<dbReference type="InterPro" id="IPR004358">
    <property type="entry name" value="Sig_transdc_His_kin-like_C"/>
</dbReference>
<dbReference type="InterPro" id="IPR014310">
    <property type="entry name" value="Sig_transdc_His_kinase_PhoR"/>
</dbReference>
<dbReference type="NCBIfam" id="TIGR02966">
    <property type="entry name" value="phoR_proteo"/>
    <property type="match status" value="1"/>
</dbReference>
<dbReference type="NCBIfam" id="NF008235">
    <property type="entry name" value="PRK11006.1"/>
    <property type="match status" value="1"/>
</dbReference>
<dbReference type="PANTHER" id="PTHR45453">
    <property type="entry name" value="PHOSPHATE REGULON SENSOR PROTEIN PHOR"/>
    <property type="match status" value="1"/>
</dbReference>
<dbReference type="PANTHER" id="PTHR45453:SF1">
    <property type="entry name" value="PHOSPHATE REGULON SENSOR PROTEIN PHOR"/>
    <property type="match status" value="1"/>
</dbReference>
<dbReference type="Pfam" id="PF02518">
    <property type="entry name" value="HATPase_c"/>
    <property type="match status" value="1"/>
</dbReference>
<dbReference type="Pfam" id="PF00512">
    <property type="entry name" value="HisKA"/>
    <property type="match status" value="1"/>
</dbReference>
<dbReference type="Pfam" id="PF00989">
    <property type="entry name" value="PAS"/>
    <property type="match status" value="1"/>
</dbReference>
<dbReference type="Pfam" id="PF11808">
    <property type="entry name" value="PhoR"/>
    <property type="match status" value="1"/>
</dbReference>
<dbReference type="PRINTS" id="PR00344">
    <property type="entry name" value="BCTRLSENSOR"/>
</dbReference>
<dbReference type="SMART" id="SM00387">
    <property type="entry name" value="HATPase_c"/>
    <property type="match status" value="1"/>
</dbReference>
<dbReference type="SMART" id="SM00388">
    <property type="entry name" value="HisKA"/>
    <property type="match status" value="1"/>
</dbReference>
<dbReference type="SMART" id="SM00091">
    <property type="entry name" value="PAS"/>
    <property type="match status" value="1"/>
</dbReference>
<dbReference type="SUPFAM" id="SSF55874">
    <property type="entry name" value="ATPase domain of HSP90 chaperone/DNA topoisomerase II/histidine kinase"/>
    <property type="match status" value="1"/>
</dbReference>
<dbReference type="SUPFAM" id="SSF47384">
    <property type="entry name" value="Homodimeric domain of signal transducing histidine kinase"/>
    <property type="match status" value="1"/>
</dbReference>
<dbReference type="SUPFAM" id="SSF55785">
    <property type="entry name" value="PYP-like sensor domain (PAS domain)"/>
    <property type="match status" value="1"/>
</dbReference>
<dbReference type="PROSITE" id="PS50109">
    <property type="entry name" value="HIS_KIN"/>
    <property type="match status" value="1"/>
</dbReference>
<dbReference type="PROSITE" id="PS50112">
    <property type="entry name" value="PAS"/>
    <property type="match status" value="1"/>
</dbReference>
<name>PHOR_PSEAE</name>
<protein>
    <recommendedName>
        <fullName>Phosphate regulon sensor protein PhoR</fullName>
        <ecNumber>2.7.13.3</ecNumber>
    </recommendedName>
</protein>
<accession>P23621</accession>
<evidence type="ECO:0000255" key="1"/>
<evidence type="ECO:0000255" key="2">
    <source>
        <dbReference type="PROSITE-ProRule" id="PRU00107"/>
    </source>
</evidence>
<evidence type="ECO:0000255" key="3">
    <source>
        <dbReference type="PROSITE-ProRule" id="PRU00140"/>
    </source>
</evidence>
<evidence type="ECO:0000305" key="4"/>
<proteinExistence type="inferred from homology"/>
<organism>
    <name type="scientific">Pseudomonas aeruginosa (strain ATCC 15692 / DSM 22644 / CIP 104116 / JCM 14847 / LMG 12228 / 1C / PRS 101 / PAO1)</name>
    <dbReference type="NCBI Taxonomy" id="208964"/>
    <lineage>
        <taxon>Bacteria</taxon>
        <taxon>Pseudomonadati</taxon>
        <taxon>Pseudomonadota</taxon>
        <taxon>Gammaproteobacteria</taxon>
        <taxon>Pseudomonadales</taxon>
        <taxon>Pseudomonadaceae</taxon>
        <taxon>Pseudomonas</taxon>
    </lineage>
</organism>
<feature type="chain" id="PRO_0000074849" description="Phosphate regulon sensor protein PhoR">
    <location>
        <begin position="1"/>
        <end position="443"/>
    </location>
</feature>
<feature type="transmembrane region" description="Helical" evidence="1">
    <location>
        <begin position="17"/>
        <end position="37"/>
    </location>
</feature>
<feature type="domain" description="PAS" evidence="3">
    <location>
        <begin position="93"/>
        <end position="182"/>
    </location>
</feature>
<feature type="domain" description="Histidine kinase" evidence="2">
    <location>
        <begin position="216"/>
        <end position="433"/>
    </location>
</feature>
<feature type="modified residue" description="Phosphohistidine; by autocatalysis" evidence="2">
    <location>
        <position position="219"/>
    </location>
</feature>
<feature type="sequence conflict" description="In Ref. 2." evidence="4" ref="2">
    <original>L</original>
    <variation>S</variation>
    <location>
        <position position="38"/>
    </location>
</feature>
<feature type="sequence conflict" description="In Ref. 2." evidence="4" ref="2">
    <original>A</original>
    <variation>R</variation>
    <location>
        <position position="43"/>
    </location>
</feature>
<feature type="sequence conflict" description="In Ref. 2." evidence="4" ref="2">
    <original>R</original>
    <variation>C</variation>
    <location>
        <position position="55"/>
    </location>
</feature>
<feature type="sequence conflict" description="In Ref. 2." evidence="4" ref="2">
    <original>A</original>
    <variation>R</variation>
    <location>
        <position position="99"/>
    </location>
</feature>